<dbReference type="EMBL" id="AB018567">
    <property type="protein sequence ID" value="BAA36843.1"/>
    <property type="molecule type" value="Genomic_DNA"/>
</dbReference>
<dbReference type="CCDS" id="CCDS40310.1"/>
<dbReference type="RefSeq" id="NP_473398.1">
    <property type="nucleotide sequence ID" value="NM_054057.4"/>
</dbReference>
<dbReference type="SMR" id="Q9Z2Y8"/>
<dbReference type="BioGRID" id="227885">
    <property type="interactions" value="18"/>
</dbReference>
<dbReference type="FunCoup" id="Q9Z2Y8">
    <property type="interactions" value="2754"/>
</dbReference>
<dbReference type="STRING" id="10090.ENSMUSP00000033875"/>
<dbReference type="GlyGen" id="Q9Z2Y8">
    <property type="glycosylation" value="2 sites, 1 O-linked glycan (1 site)"/>
</dbReference>
<dbReference type="iPTMnet" id="Q9Z2Y8"/>
<dbReference type="PhosphoSitePlus" id="Q9Z2Y8"/>
<dbReference type="jPOST" id="Q9Z2Y8"/>
<dbReference type="PaxDb" id="10090-ENSMUSP00000033875"/>
<dbReference type="ProteomicsDB" id="289623"/>
<dbReference type="Pumba" id="Q9Z2Y8"/>
<dbReference type="Antibodypedia" id="4465">
    <property type="antibodies" value="293 antibodies from 24 providers"/>
</dbReference>
<dbReference type="DNASU" id="114863"/>
<dbReference type="Ensembl" id="ENSMUST00000033875.10">
    <property type="protein sequence ID" value="ENSMUSP00000033875.9"/>
    <property type="gene ID" value="ENSMUSG00000031485.16"/>
</dbReference>
<dbReference type="GeneID" id="114863"/>
<dbReference type="KEGG" id="mmu:114863"/>
<dbReference type="UCSC" id="uc009lht.1">
    <property type="organism name" value="mouse"/>
</dbReference>
<dbReference type="AGR" id="MGI:1891207"/>
<dbReference type="CTD" id="11212"/>
<dbReference type="MGI" id="MGI:1891207">
    <property type="gene designation" value="Plpbp"/>
</dbReference>
<dbReference type="VEuPathDB" id="HostDB:ENSMUSG00000031485"/>
<dbReference type="eggNOG" id="KOG3157">
    <property type="taxonomic scope" value="Eukaryota"/>
</dbReference>
<dbReference type="GeneTree" id="ENSGT00390000004928"/>
<dbReference type="HOGENOM" id="CLU_059988_2_1_1"/>
<dbReference type="InParanoid" id="Q9Z2Y8"/>
<dbReference type="OMA" id="PLEWHMI"/>
<dbReference type="PhylomeDB" id="Q9Z2Y8"/>
<dbReference type="TreeFam" id="TF314637"/>
<dbReference type="BioGRID-ORCS" id="114863">
    <property type="hits" value="2 hits in 78 CRISPR screens"/>
</dbReference>
<dbReference type="ChiTaRS" id="Prosc">
    <property type="organism name" value="mouse"/>
</dbReference>
<dbReference type="PRO" id="PR:Q9Z2Y8"/>
<dbReference type="Proteomes" id="UP000000589">
    <property type="component" value="Chromosome 8"/>
</dbReference>
<dbReference type="RNAct" id="Q9Z2Y8">
    <property type="molecule type" value="protein"/>
</dbReference>
<dbReference type="Bgee" id="ENSMUSG00000031485">
    <property type="expression patterns" value="Expressed in gastrula and 260 other cell types or tissues"/>
</dbReference>
<dbReference type="ExpressionAtlas" id="Q9Z2Y8">
    <property type="expression patterns" value="baseline and differential"/>
</dbReference>
<dbReference type="GO" id="GO:0005829">
    <property type="term" value="C:cytosol"/>
    <property type="evidence" value="ECO:0007669"/>
    <property type="project" value="Ensembl"/>
</dbReference>
<dbReference type="GO" id="GO:0005739">
    <property type="term" value="C:mitochondrion"/>
    <property type="evidence" value="ECO:0007005"/>
    <property type="project" value="MGI"/>
</dbReference>
<dbReference type="GO" id="GO:0030170">
    <property type="term" value="F:pyridoxal phosphate binding"/>
    <property type="evidence" value="ECO:0007669"/>
    <property type="project" value="UniProtKB-UniRule"/>
</dbReference>
<dbReference type="CDD" id="cd06822">
    <property type="entry name" value="PLPDE_III_YBL036c_euk"/>
    <property type="match status" value="1"/>
</dbReference>
<dbReference type="FunFam" id="3.20.20.10:FF:000007">
    <property type="entry name" value="Pyridoxal phosphate homeostasis protein"/>
    <property type="match status" value="1"/>
</dbReference>
<dbReference type="Gene3D" id="3.20.20.10">
    <property type="entry name" value="Alanine racemase"/>
    <property type="match status" value="1"/>
</dbReference>
<dbReference type="HAMAP" id="MF_02087">
    <property type="entry name" value="PLP_homeostasis"/>
    <property type="match status" value="1"/>
</dbReference>
<dbReference type="InterPro" id="IPR001608">
    <property type="entry name" value="Ala_racemase_N"/>
</dbReference>
<dbReference type="InterPro" id="IPR029066">
    <property type="entry name" value="PLP-binding_barrel"/>
</dbReference>
<dbReference type="InterPro" id="IPR011078">
    <property type="entry name" value="PyrdxlP_homeostasis"/>
</dbReference>
<dbReference type="NCBIfam" id="TIGR00044">
    <property type="entry name" value="YggS family pyridoxal phosphate-dependent enzyme"/>
    <property type="match status" value="1"/>
</dbReference>
<dbReference type="PANTHER" id="PTHR10146">
    <property type="entry name" value="PROLINE SYNTHETASE CO-TRANSCRIBED BACTERIAL HOMOLOG PROTEIN"/>
    <property type="match status" value="1"/>
</dbReference>
<dbReference type="PANTHER" id="PTHR10146:SF14">
    <property type="entry name" value="PYRIDOXAL PHOSPHATE HOMEOSTASIS PROTEIN"/>
    <property type="match status" value="1"/>
</dbReference>
<dbReference type="Pfam" id="PF01168">
    <property type="entry name" value="Ala_racemase_N"/>
    <property type="match status" value="1"/>
</dbReference>
<dbReference type="PIRSF" id="PIRSF004848">
    <property type="entry name" value="YBL036c_PLPDEIII"/>
    <property type="match status" value="1"/>
</dbReference>
<dbReference type="SUPFAM" id="SSF51419">
    <property type="entry name" value="PLP-binding barrel"/>
    <property type="match status" value="1"/>
</dbReference>
<dbReference type="PROSITE" id="PS01211">
    <property type="entry name" value="UPF0001"/>
    <property type="match status" value="1"/>
</dbReference>
<gene>
    <name evidence="2 3" type="primary">Plpbp</name>
    <name evidence="2 3" type="synonym">Prosc</name>
</gene>
<protein>
    <recommendedName>
        <fullName evidence="2">Pyridoxal phosphate homeostasis protein</fullName>
        <shortName evidence="2">PLP homeostasis protein</shortName>
    </recommendedName>
    <alternativeName>
        <fullName evidence="2">Proline synthase co-transcribed bacterial homolog protein</fullName>
    </alternativeName>
    <alternativeName>
        <fullName evidence="3">Pyridoxal phosphate-binding protein</fullName>
    </alternativeName>
</protein>
<feature type="chain" id="PRO_0000163211" description="Pyridoxal phosphate homeostasis protein">
    <location>
        <begin position="1"/>
        <end position="274"/>
    </location>
</feature>
<feature type="modified residue" description="Phosphoserine" evidence="1">
    <location>
        <position position="6"/>
    </location>
</feature>
<feature type="modified residue" description="N6-(pyridoxal phosphate)lysine" evidence="2">
    <location>
        <position position="47"/>
    </location>
</feature>
<feature type="modified residue" description="Phosphotyrosine" evidence="4">
    <location>
        <position position="69"/>
    </location>
</feature>
<feature type="modified residue" description="N6-succinyllysine" evidence="5">
    <location>
        <position position="125"/>
    </location>
</feature>
<feature type="modified residue" description="Phosphoserine" evidence="1">
    <location>
        <position position="226"/>
    </location>
</feature>
<feature type="modified residue" description="Phosphoserine" evidence="1">
    <location>
        <position position="244"/>
    </location>
</feature>
<keyword id="KW-0597">Phosphoprotein</keyword>
<keyword id="KW-0663">Pyridoxal phosphate</keyword>
<keyword id="KW-1185">Reference proteome</keyword>
<proteinExistence type="evidence at protein level"/>
<reference key="1">
    <citation type="journal article" date="1999" name="J. Hum. Genet.">
        <title>Cloning and characterization of human and mouse PROSC (proline synthetase co-transcribed) genes.</title>
        <authorList>
            <person name="Ikegawa S."/>
            <person name="Isomura M."/>
            <person name="Koshizuka Y."/>
            <person name="Nakamura Y."/>
        </authorList>
    </citation>
    <scope>NUCLEOTIDE SEQUENCE [GENOMIC DNA]</scope>
</reference>
<reference key="2">
    <citation type="journal article" date="2008" name="J. Proteome Res.">
        <title>Large-scale identification and evolution indexing of tyrosine phosphorylation sites from murine brain.</title>
        <authorList>
            <person name="Ballif B.A."/>
            <person name="Carey G.R."/>
            <person name="Sunyaev S.R."/>
            <person name="Gygi S.P."/>
        </authorList>
    </citation>
    <scope>PHOSPHORYLATION [LARGE SCALE ANALYSIS] AT TYR-69</scope>
    <scope>IDENTIFICATION BY MASS SPECTROMETRY [LARGE SCALE ANALYSIS]</scope>
    <source>
        <tissue>Brain</tissue>
    </source>
</reference>
<reference key="3">
    <citation type="journal article" date="2010" name="Cell">
        <title>A tissue-specific atlas of mouse protein phosphorylation and expression.</title>
        <authorList>
            <person name="Huttlin E.L."/>
            <person name="Jedrychowski M.P."/>
            <person name="Elias J.E."/>
            <person name="Goswami T."/>
            <person name="Rad R."/>
            <person name="Beausoleil S.A."/>
            <person name="Villen J."/>
            <person name="Haas W."/>
            <person name="Sowa M.E."/>
            <person name="Gygi S.P."/>
        </authorList>
    </citation>
    <scope>IDENTIFICATION BY MASS SPECTROMETRY [LARGE SCALE ANALYSIS]</scope>
    <source>
        <tissue>Brain</tissue>
        <tissue>Brown adipose tissue</tissue>
        <tissue>Heart</tissue>
        <tissue>Kidney</tissue>
        <tissue>Liver</tissue>
        <tissue>Lung</tissue>
        <tissue>Pancreas</tissue>
        <tissue>Spleen</tissue>
        <tissue>Testis</tissue>
    </source>
</reference>
<reference key="4">
    <citation type="journal article" date="2013" name="Mol. Cell">
        <title>SIRT5-mediated lysine desuccinylation impacts diverse metabolic pathways.</title>
        <authorList>
            <person name="Park J."/>
            <person name="Chen Y."/>
            <person name="Tishkoff D.X."/>
            <person name="Peng C."/>
            <person name="Tan M."/>
            <person name="Dai L."/>
            <person name="Xie Z."/>
            <person name="Zhang Y."/>
            <person name="Zwaans B.M."/>
            <person name="Skinner M.E."/>
            <person name="Lombard D.B."/>
            <person name="Zhao Y."/>
        </authorList>
    </citation>
    <scope>SUCCINYLATION [LARGE SCALE ANALYSIS] AT LYS-125</scope>
    <scope>IDENTIFICATION BY MASS SPECTROMETRY [LARGE SCALE ANALYSIS]</scope>
    <source>
        <tissue>Liver</tissue>
    </source>
</reference>
<evidence type="ECO:0000250" key="1">
    <source>
        <dbReference type="UniProtKB" id="O94903"/>
    </source>
</evidence>
<evidence type="ECO:0000255" key="2">
    <source>
        <dbReference type="HAMAP-Rule" id="MF_03225"/>
    </source>
</evidence>
<evidence type="ECO:0000312" key="3">
    <source>
        <dbReference type="MGI" id="MGI:1891207"/>
    </source>
</evidence>
<evidence type="ECO:0007744" key="4">
    <source>
    </source>
</evidence>
<evidence type="ECO:0007744" key="5">
    <source>
    </source>
</evidence>
<organism>
    <name type="scientific">Mus musculus</name>
    <name type="common">Mouse</name>
    <dbReference type="NCBI Taxonomy" id="10090"/>
    <lineage>
        <taxon>Eukaryota</taxon>
        <taxon>Metazoa</taxon>
        <taxon>Chordata</taxon>
        <taxon>Craniata</taxon>
        <taxon>Vertebrata</taxon>
        <taxon>Euteleostomi</taxon>
        <taxon>Mammalia</taxon>
        <taxon>Eutheria</taxon>
        <taxon>Euarchontoglires</taxon>
        <taxon>Glires</taxon>
        <taxon>Rodentia</taxon>
        <taxon>Myomorpha</taxon>
        <taxon>Muroidea</taxon>
        <taxon>Muridae</taxon>
        <taxon>Murinae</taxon>
        <taxon>Mus</taxon>
        <taxon>Mus</taxon>
    </lineage>
</organism>
<comment type="function">
    <text evidence="2">Pyridoxal 5'-phosphate (PLP)-binding protein, which may be involved in intracellular homeostatic regulation of pyridoxal 5'-phosphate (PLP), the active form of vitamin B6.</text>
</comment>
<comment type="similarity">
    <text evidence="2">Belongs to the pyridoxal phosphate-binding protein YggS/PROSC family.</text>
</comment>
<name>PLPHP_MOUSE</name>
<sequence length="274" mass="30049">MLRGGSMTAELGVGFALRAVNERVQQSVARRPRDLPAIQPRLVAVSKTKPADMVIEAYGHGQRTFGENYVQELLEKASNPKILSSCPEIKWHFIGHLQKQNVNKLMAVPNLSMLETVDSVKLADKVNSSWQKKGPTEPLKVMVQINTSGEDSKHGLLPSETIAVVEHIKASCPSLEFVGLMTIGSFGHDLSQGPNPDFQRLLTLRRELCEKLGIPVEQVELSMGMSMDFQHAIEVGSTNVRIGSTIFGERDYSKKPALDKTADAKASVPLVQGH</sequence>
<accession>Q9Z2Y8</accession>